<sequence>MSRYRGPRLKIVRRLGELPGLTRKMAKRKSPPGQHGAASKKPSQYRIRLEEKQKLRYNYGVTEKQLLRYMQRARRAKGSSGENLLQLLEMRLDTTIFRLGMAPTMLSARQLITHGHILVSEQRVNIPSYQCSPKEKISIRSNSRSRKLIEGYMSTMGSIVTPPHLELKKEKLEGNIQEIIDRQWVGLPINELLVVEYYSPKV</sequence>
<comment type="function">
    <text evidence="1">One of the primary rRNA binding proteins, it binds directly to 16S rRNA where it nucleates assembly of the body of the 30S subunit.</text>
</comment>
<comment type="function">
    <text evidence="1">With S5 and S12 plays an important role in translational accuracy.</text>
</comment>
<comment type="subunit">
    <text evidence="1">Part of the 30S ribosomal subunit. Contacts protein S5. The interaction surface between S4 and S5 is involved in control of translational fidelity (By similarity).</text>
</comment>
<comment type="subcellular location">
    <subcellularLocation>
        <location>Plastid</location>
        <location>Chloroplast</location>
    </subcellularLocation>
</comment>
<comment type="similarity">
    <text evidence="3">Belongs to the universal ribosomal protein uS4 family.</text>
</comment>
<proteinExistence type="inferred from homology"/>
<accession>Q9TKX5</accession>
<protein>
    <recommendedName>
        <fullName evidence="3">Small ribosomal subunit protein uS4c</fullName>
    </recommendedName>
    <alternativeName>
        <fullName>30S ribosomal protein S4, chloroplastic</fullName>
    </alternativeName>
</protein>
<gene>
    <name type="primary">rps4</name>
</gene>
<evidence type="ECO:0000250" key="1"/>
<evidence type="ECO:0000256" key="2">
    <source>
        <dbReference type="SAM" id="MobiDB-lite"/>
    </source>
</evidence>
<evidence type="ECO:0000305" key="3"/>
<dbReference type="EMBL" id="AF137379">
    <property type="protein sequence ID" value="AAD54841.1"/>
    <property type="molecule type" value="Genomic_DNA"/>
</dbReference>
<dbReference type="RefSeq" id="NP_050870.1">
    <property type="nucleotide sequence ID" value="NC_000927.1"/>
</dbReference>
<dbReference type="SMR" id="Q9TKX5"/>
<dbReference type="GeneID" id="802026"/>
<dbReference type="GO" id="GO:0009507">
    <property type="term" value="C:chloroplast"/>
    <property type="evidence" value="ECO:0007669"/>
    <property type="project" value="UniProtKB-SubCell"/>
</dbReference>
<dbReference type="GO" id="GO:0015935">
    <property type="term" value="C:small ribosomal subunit"/>
    <property type="evidence" value="ECO:0007669"/>
    <property type="project" value="InterPro"/>
</dbReference>
<dbReference type="GO" id="GO:0019843">
    <property type="term" value="F:rRNA binding"/>
    <property type="evidence" value="ECO:0007669"/>
    <property type="project" value="UniProtKB-UniRule"/>
</dbReference>
<dbReference type="GO" id="GO:0003735">
    <property type="term" value="F:structural constituent of ribosome"/>
    <property type="evidence" value="ECO:0007669"/>
    <property type="project" value="InterPro"/>
</dbReference>
<dbReference type="GO" id="GO:0042274">
    <property type="term" value="P:ribosomal small subunit biogenesis"/>
    <property type="evidence" value="ECO:0007669"/>
    <property type="project" value="TreeGrafter"/>
</dbReference>
<dbReference type="GO" id="GO:0006412">
    <property type="term" value="P:translation"/>
    <property type="evidence" value="ECO:0007669"/>
    <property type="project" value="UniProtKB-UniRule"/>
</dbReference>
<dbReference type="CDD" id="cd00165">
    <property type="entry name" value="S4"/>
    <property type="match status" value="1"/>
</dbReference>
<dbReference type="FunFam" id="3.10.290.10:FF:000001">
    <property type="entry name" value="30S ribosomal protein S4"/>
    <property type="match status" value="1"/>
</dbReference>
<dbReference type="FunFam" id="1.10.1050.10:FF:000002">
    <property type="entry name" value="30S ribosomal protein S4, chloroplastic"/>
    <property type="match status" value="1"/>
</dbReference>
<dbReference type="Gene3D" id="1.10.1050.10">
    <property type="entry name" value="Ribosomal Protein S4 Delta 41, Chain A, domain 1"/>
    <property type="match status" value="1"/>
</dbReference>
<dbReference type="Gene3D" id="3.10.290.10">
    <property type="entry name" value="RNA-binding S4 domain"/>
    <property type="match status" value="1"/>
</dbReference>
<dbReference type="HAMAP" id="MF_01306_B">
    <property type="entry name" value="Ribosomal_uS4_B"/>
    <property type="match status" value="1"/>
</dbReference>
<dbReference type="InterPro" id="IPR022801">
    <property type="entry name" value="Ribosomal_uS4"/>
</dbReference>
<dbReference type="InterPro" id="IPR005709">
    <property type="entry name" value="Ribosomal_uS4_bac-type"/>
</dbReference>
<dbReference type="InterPro" id="IPR018079">
    <property type="entry name" value="Ribosomal_uS4_CS"/>
</dbReference>
<dbReference type="InterPro" id="IPR001912">
    <property type="entry name" value="Ribosomal_uS4_N"/>
</dbReference>
<dbReference type="InterPro" id="IPR002942">
    <property type="entry name" value="S4_RNA-bd"/>
</dbReference>
<dbReference type="InterPro" id="IPR036986">
    <property type="entry name" value="S4_RNA-bd_sf"/>
</dbReference>
<dbReference type="NCBIfam" id="NF003717">
    <property type="entry name" value="PRK05327.1"/>
    <property type="match status" value="1"/>
</dbReference>
<dbReference type="NCBIfam" id="TIGR01017">
    <property type="entry name" value="rpsD_bact"/>
    <property type="match status" value="1"/>
</dbReference>
<dbReference type="PANTHER" id="PTHR11831">
    <property type="entry name" value="30S 40S RIBOSOMAL PROTEIN"/>
    <property type="match status" value="1"/>
</dbReference>
<dbReference type="PANTHER" id="PTHR11831:SF4">
    <property type="entry name" value="SMALL RIBOSOMAL SUBUNIT PROTEIN US4M"/>
    <property type="match status" value="1"/>
</dbReference>
<dbReference type="Pfam" id="PF00163">
    <property type="entry name" value="Ribosomal_S4"/>
    <property type="match status" value="1"/>
</dbReference>
<dbReference type="Pfam" id="PF01479">
    <property type="entry name" value="S4"/>
    <property type="match status" value="1"/>
</dbReference>
<dbReference type="SMART" id="SM01390">
    <property type="entry name" value="Ribosomal_S4"/>
    <property type="match status" value="1"/>
</dbReference>
<dbReference type="SMART" id="SM00363">
    <property type="entry name" value="S4"/>
    <property type="match status" value="1"/>
</dbReference>
<dbReference type="SUPFAM" id="SSF55174">
    <property type="entry name" value="Alpha-L RNA-binding motif"/>
    <property type="match status" value="1"/>
</dbReference>
<dbReference type="PROSITE" id="PS00632">
    <property type="entry name" value="RIBOSOMAL_S4"/>
    <property type="match status" value="1"/>
</dbReference>
<dbReference type="PROSITE" id="PS50889">
    <property type="entry name" value="S4"/>
    <property type="match status" value="1"/>
</dbReference>
<keyword id="KW-0150">Chloroplast</keyword>
<keyword id="KW-0934">Plastid</keyword>
<keyword id="KW-0687">Ribonucleoprotein</keyword>
<keyword id="KW-0689">Ribosomal protein</keyword>
<keyword id="KW-0694">RNA-binding</keyword>
<keyword id="KW-0699">rRNA-binding</keyword>
<feature type="chain" id="PRO_0000132635" description="Small ribosomal subunit protein uS4c">
    <location>
        <begin position="1"/>
        <end position="202"/>
    </location>
</feature>
<feature type="domain" description="S4 RNA-binding">
    <location>
        <begin position="90"/>
        <end position="152"/>
    </location>
</feature>
<feature type="region of interest" description="Disordered" evidence="2">
    <location>
        <begin position="18"/>
        <end position="45"/>
    </location>
</feature>
<geneLocation type="chloroplast"/>
<reference key="1">
    <citation type="journal article" date="1999" name="Proc. Natl. Acad. Sci. U.S.A.">
        <title>The complete chloroplast DNA sequence of the green alga Nephroselmis olivacea: insights into the architecture of ancestral chloroplast genomes.</title>
        <authorList>
            <person name="Turmel M."/>
            <person name="Otis C."/>
            <person name="Lemieux C."/>
        </authorList>
    </citation>
    <scope>NUCLEOTIDE SEQUENCE [LARGE SCALE GENOMIC DNA]</scope>
    <source>
        <strain>NIES-484 / S-N-5-8</strain>
    </source>
</reference>
<name>RR4_NEPOL</name>
<organism>
    <name type="scientific">Nephroselmis olivacea</name>
    <name type="common">Green alga</name>
    <dbReference type="NCBI Taxonomy" id="31312"/>
    <lineage>
        <taxon>Eukaryota</taxon>
        <taxon>Viridiplantae</taxon>
        <taxon>Chlorophyta</taxon>
        <taxon>Nephroselmidophyceae</taxon>
        <taxon>Nephroselmidales</taxon>
        <taxon>Nephroselmidaceae</taxon>
        <taxon>Nephroselmis</taxon>
    </lineage>
</organism>